<organism>
    <name type="scientific">Neisseria meningitidis serogroup B (strain ATCC BAA-335 / MC58)</name>
    <dbReference type="NCBI Taxonomy" id="122586"/>
    <lineage>
        <taxon>Bacteria</taxon>
        <taxon>Pseudomonadati</taxon>
        <taxon>Pseudomonadota</taxon>
        <taxon>Betaproteobacteria</taxon>
        <taxon>Neisseriales</taxon>
        <taxon>Neisseriaceae</taxon>
        <taxon>Neisseria</taxon>
    </lineage>
</organism>
<dbReference type="EMBL" id="AE002098">
    <property type="protein sequence ID" value="AAF40585.1"/>
    <property type="molecule type" value="Genomic_DNA"/>
</dbReference>
<dbReference type="PIR" id="C81235">
    <property type="entry name" value="C81235"/>
</dbReference>
<dbReference type="RefSeq" id="NP_273184.1">
    <property type="nucleotide sequence ID" value="NC_003112.2"/>
</dbReference>
<dbReference type="RefSeq" id="WP_002215369.1">
    <property type="nucleotide sequence ID" value="NC_003112.2"/>
</dbReference>
<dbReference type="SMR" id="P65592"/>
<dbReference type="FunCoup" id="P65592">
    <property type="interactions" value="482"/>
</dbReference>
<dbReference type="STRING" id="122586.NMB0126"/>
<dbReference type="PaxDb" id="122586-NMB0126"/>
<dbReference type="GeneID" id="93387202"/>
<dbReference type="KEGG" id="nme:NMB0126"/>
<dbReference type="PATRIC" id="fig|122586.8.peg.166"/>
<dbReference type="HOGENOM" id="CLU_067287_1_0_4"/>
<dbReference type="InParanoid" id="P65592"/>
<dbReference type="OrthoDB" id="9809075at2"/>
<dbReference type="Proteomes" id="UP000000425">
    <property type="component" value="Chromosome"/>
</dbReference>
<dbReference type="GO" id="GO:0005829">
    <property type="term" value="C:cytosol"/>
    <property type="evidence" value="ECO:0000318"/>
    <property type="project" value="GO_Central"/>
</dbReference>
<dbReference type="GO" id="GO:0006353">
    <property type="term" value="P:DNA-templated transcription termination"/>
    <property type="evidence" value="ECO:0007669"/>
    <property type="project" value="UniProtKB-UniRule"/>
</dbReference>
<dbReference type="GO" id="GO:0032784">
    <property type="term" value="P:regulation of DNA-templated transcription elongation"/>
    <property type="evidence" value="ECO:0007669"/>
    <property type="project" value="InterPro"/>
</dbReference>
<dbReference type="GO" id="GO:0031564">
    <property type="term" value="P:transcription antitermination"/>
    <property type="evidence" value="ECO:0007669"/>
    <property type="project" value="UniProtKB-UniRule"/>
</dbReference>
<dbReference type="GO" id="GO:0140673">
    <property type="term" value="P:transcription elongation-coupled chromatin remodeling"/>
    <property type="evidence" value="ECO:0007669"/>
    <property type="project" value="InterPro"/>
</dbReference>
<dbReference type="CDD" id="cd06091">
    <property type="entry name" value="KOW_NusG"/>
    <property type="match status" value="1"/>
</dbReference>
<dbReference type="CDD" id="cd09891">
    <property type="entry name" value="NGN_Bact_1"/>
    <property type="match status" value="1"/>
</dbReference>
<dbReference type="FunFam" id="2.30.30.30:FF:000002">
    <property type="entry name" value="Transcription termination/antitermination factor NusG"/>
    <property type="match status" value="1"/>
</dbReference>
<dbReference type="FunFam" id="3.30.70.940:FF:000001">
    <property type="entry name" value="Transcription termination/antitermination protein NusG"/>
    <property type="match status" value="1"/>
</dbReference>
<dbReference type="Gene3D" id="2.30.30.30">
    <property type="match status" value="1"/>
</dbReference>
<dbReference type="Gene3D" id="3.30.70.940">
    <property type="entry name" value="NusG, N-terminal domain"/>
    <property type="match status" value="1"/>
</dbReference>
<dbReference type="HAMAP" id="MF_00948">
    <property type="entry name" value="NusG"/>
    <property type="match status" value="1"/>
</dbReference>
<dbReference type="InterPro" id="IPR005824">
    <property type="entry name" value="KOW"/>
</dbReference>
<dbReference type="InterPro" id="IPR047050">
    <property type="entry name" value="NGN"/>
</dbReference>
<dbReference type="InterPro" id="IPR006645">
    <property type="entry name" value="NGN-like_dom"/>
</dbReference>
<dbReference type="InterPro" id="IPR036735">
    <property type="entry name" value="NGN_dom_sf"/>
</dbReference>
<dbReference type="InterPro" id="IPR043425">
    <property type="entry name" value="NusG-like"/>
</dbReference>
<dbReference type="InterPro" id="IPR014722">
    <property type="entry name" value="Rib_uL2_dom2"/>
</dbReference>
<dbReference type="InterPro" id="IPR001062">
    <property type="entry name" value="Transcrpt_antiterm_NusG"/>
</dbReference>
<dbReference type="InterPro" id="IPR015869">
    <property type="entry name" value="Transcrpt_antiterm_NusG_bac_CS"/>
</dbReference>
<dbReference type="InterPro" id="IPR008991">
    <property type="entry name" value="Translation_prot_SH3-like_sf"/>
</dbReference>
<dbReference type="NCBIfam" id="TIGR00922">
    <property type="entry name" value="nusG"/>
    <property type="match status" value="1"/>
</dbReference>
<dbReference type="PANTHER" id="PTHR30265">
    <property type="entry name" value="RHO-INTERACTING TRANSCRIPTION TERMINATION FACTOR NUSG"/>
    <property type="match status" value="1"/>
</dbReference>
<dbReference type="PANTHER" id="PTHR30265:SF2">
    <property type="entry name" value="TRANSCRIPTION TERMINATION_ANTITERMINATION PROTEIN NUSG"/>
    <property type="match status" value="1"/>
</dbReference>
<dbReference type="Pfam" id="PF00467">
    <property type="entry name" value="KOW"/>
    <property type="match status" value="1"/>
</dbReference>
<dbReference type="Pfam" id="PF02357">
    <property type="entry name" value="NusG"/>
    <property type="match status" value="1"/>
</dbReference>
<dbReference type="PRINTS" id="PR00338">
    <property type="entry name" value="NUSGTNSCPFCT"/>
</dbReference>
<dbReference type="SMART" id="SM00739">
    <property type="entry name" value="KOW"/>
    <property type="match status" value="1"/>
</dbReference>
<dbReference type="SMART" id="SM00738">
    <property type="entry name" value="NGN"/>
    <property type="match status" value="1"/>
</dbReference>
<dbReference type="SUPFAM" id="SSF82679">
    <property type="entry name" value="N-utilization substance G protein NusG, N-terminal domain"/>
    <property type="match status" value="1"/>
</dbReference>
<dbReference type="SUPFAM" id="SSF50104">
    <property type="entry name" value="Translation proteins SH3-like domain"/>
    <property type="match status" value="1"/>
</dbReference>
<dbReference type="PROSITE" id="PS01014">
    <property type="entry name" value="NUSG"/>
    <property type="match status" value="1"/>
</dbReference>
<accession>P65592</accession>
<accession>Q9JRD9</accession>
<gene>
    <name evidence="1" type="primary">nusG</name>
    <name type="ordered locus">NMB0126</name>
</gene>
<reference key="1">
    <citation type="journal article" date="2000" name="Science">
        <title>Complete genome sequence of Neisseria meningitidis serogroup B strain MC58.</title>
        <authorList>
            <person name="Tettelin H."/>
            <person name="Saunders N.J."/>
            <person name="Heidelberg J.F."/>
            <person name="Jeffries A.C."/>
            <person name="Nelson K.E."/>
            <person name="Eisen J.A."/>
            <person name="Ketchum K.A."/>
            <person name="Hood D.W."/>
            <person name="Peden J.F."/>
            <person name="Dodson R.J."/>
            <person name="Nelson W.C."/>
            <person name="Gwinn M.L."/>
            <person name="DeBoy R.T."/>
            <person name="Peterson J.D."/>
            <person name="Hickey E.K."/>
            <person name="Haft D.H."/>
            <person name="Salzberg S.L."/>
            <person name="White O."/>
            <person name="Fleischmann R.D."/>
            <person name="Dougherty B.A."/>
            <person name="Mason T.M."/>
            <person name="Ciecko A."/>
            <person name="Parksey D.S."/>
            <person name="Blair E."/>
            <person name="Cittone H."/>
            <person name="Clark E.B."/>
            <person name="Cotton M.D."/>
            <person name="Utterback T.R."/>
            <person name="Khouri H.M."/>
            <person name="Qin H."/>
            <person name="Vamathevan J.J."/>
            <person name="Gill J."/>
            <person name="Scarlato V."/>
            <person name="Masignani V."/>
            <person name="Pizza M."/>
            <person name="Grandi G."/>
            <person name="Sun L."/>
            <person name="Smith H.O."/>
            <person name="Fraser C.M."/>
            <person name="Moxon E.R."/>
            <person name="Rappuoli R."/>
            <person name="Venter J.C."/>
        </authorList>
    </citation>
    <scope>NUCLEOTIDE SEQUENCE [LARGE SCALE GENOMIC DNA]</scope>
    <source>
        <strain>ATCC BAA-335 / MC58</strain>
    </source>
</reference>
<protein>
    <recommendedName>
        <fullName evidence="1">Transcription termination/antitermination protein NusG</fullName>
    </recommendedName>
</protein>
<keyword id="KW-1185">Reference proteome</keyword>
<keyword id="KW-0804">Transcription</keyword>
<keyword id="KW-0889">Transcription antitermination</keyword>
<keyword id="KW-0805">Transcription regulation</keyword>
<keyword id="KW-0806">Transcription termination</keyword>
<name>NUSG_NEIMB</name>
<evidence type="ECO:0000255" key="1">
    <source>
        <dbReference type="HAMAP-Rule" id="MF_00948"/>
    </source>
</evidence>
<sequence length="178" mass="20550">MSKKWYVVQAYSGFEKNVQRILEERIAREEMGDYFGQILVPVEKVVDIRNGRKTISERKSYPGYVLVEMEMTDDSWHLVKSTPRVSGFIGGRANRPTPISQREAEIILQQVQTGIEKPKPKVEFEVGQQVRVNEGPFADFNGVVEEVNYERNKLRVSVQIFGRETPVELEFSQVEKIN</sequence>
<feature type="chain" id="PRO_0000113938" description="Transcription termination/antitermination protein NusG">
    <location>
        <begin position="1"/>
        <end position="178"/>
    </location>
</feature>
<feature type="domain" description="KOW" evidence="1">
    <location>
        <begin position="126"/>
        <end position="156"/>
    </location>
</feature>
<proteinExistence type="inferred from homology"/>
<comment type="function">
    <text evidence="1">Participates in transcription elongation, termination and antitermination.</text>
</comment>
<comment type="similarity">
    <text evidence="1">Belongs to the NusG family.</text>
</comment>